<accession>B8CX98</accession>
<evidence type="ECO:0000255" key="1">
    <source>
        <dbReference type="HAMAP-Rule" id="MF_00096"/>
    </source>
</evidence>
<evidence type="ECO:0000256" key="2">
    <source>
        <dbReference type="SAM" id="MobiDB-lite"/>
    </source>
</evidence>
<proteinExistence type="inferred from homology"/>
<name>MUTS_HALOH</name>
<sequence length="896" mass="101976">MSKLTPMMQQYQSIKNKYKDAILFFRLGDFYEMFNDDAKIAARELDLALTARNKGGGEKAPMAGVPCHSAESYIAKLLEKGYKVAICEQIEDPSEAKGLVSREVVRIITPGTIIENEMLKDKENNYLASAICYKDHLGFSYVDISTGEFYVTQFSQKFSDKVWDELDRIQPREVIICKELEETENFADKKKQMNFVYNYSRIEKVKAAYNFLLEHFKTNSLSGFGCEDKPAAILAAGEIINFLKDTQKRTLEHINRITTYNLTDYMVLDSATRYNLELTSTIRGNKHKGSLLNVLDQTITSMGGRLIKKWINQPLIDRNKIETRLDAVEELVNNYLLLQEIREHLKGIYDLERILGKVSYGSANARDLAALKYSILKLPQIKKDLEQLNTKLFKNMHETFDPLIDLAGLLDRSIVDEPPVSVREGGLIKDGYSSELDELRKARTEGKDWIANLQKTERERTGISSLKVGFNKVFGYYIEITKANLDRVPDNYTRKQTLSNSERFITPELKEKEALVLGAEEKINDLEYKLFVKIRDIVRDNIKRIKKTAAIISKLDVLTSLAQNALERDYNRPRINNDGVIEIIKGRHPVVEDMGKGAFVPNDTYLDLEEERFIIITGPNMSGKSTYMRQVALIVLMAQMGSFVPADKATIGIVDRIFTRVGASDDLTTGQSTFMVEMNEVANIVNNATRNSLIILDEVGRGTSTYDGLSIAWAVSEYINNPDRIGARTLFATHYHELTQLENRPGIKNYNVLVEEDEDGVHFLHKIIPGKASESYGIEVAQLAGLPMEIIIRAQEILAELEKKGKESTKTGKGENKNISHKTESDLINNIHESDKEYLTKRNTNDKVQQLPLFKSEYRVIEKIKNKDIVNMTPMEAINFLFEIQKELKEKGENYA</sequence>
<reference key="1">
    <citation type="journal article" date="2009" name="PLoS ONE">
        <title>Genome analysis of the anaerobic thermohalophilic bacterium Halothermothrix orenii.</title>
        <authorList>
            <person name="Mavromatis K."/>
            <person name="Ivanova N."/>
            <person name="Anderson I."/>
            <person name="Lykidis A."/>
            <person name="Hooper S.D."/>
            <person name="Sun H."/>
            <person name="Kunin V."/>
            <person name="Lapidus A."/>
            <person name="Hugenholtz P."/>
            <person name="Patel B."/>
            <person name="Kyrpides N.C."/>
        </authorList>
    </citation>
    <scope>NUCLEOTIDE SEQUENCE [LARGE SCALE GENOMIC DNA]</scope>
    <source>
        <strain>H 168 / OCM 544 / DSM 9562</strain>
    </source>
</reference>
<organism>
    <name type="scientific">Halothermothrix orenii (strain H 168 / OCM 544 / DSM 9562)</name>
    <dbReference type="NCBI Taxonomy" id="373903"/>
    <lineage>
        <taxon>Bacteria</taxon>
        <taxon>Bacillati</taxon>
        <taxon>Bacillota</taxon>
        <taxon>Clostridia</taxon>
        <taxon>Halanaerobiales</taxon>
        <taxon>Halothermotrichaceae</taxon>
        <taxon>Halothermothrix</taxon>
    </lineage>
</organism>
<keyword id="KW-0067">ATP-binding</keyword>
<keyword id="KW-0227">DNA damage</keyword>
<keyword id="KW-0234">DNA repair</keyword>
<keyword id="KW-0238">DNA-binding</keyword>
<keyword id="KW-0547">Nucleotide-binding</keyword>
<keyword id="KW-1185">Reference proteome</keyword>
<gene>
    <name evidence="1" type="primary">mutS</name>
    <name type="ordered locus">Hore_11670</name>
</gene>
<comment type="function">
    <text evidence="1">This protein is involved in the repair of mismatches in DNA. It is possible that it carries out the mismatch recognition step. This protein has a weak ATPase activity.</text>
</comment>
<comment type="similarity">
    <text evidence="1">Belongs to the DNA mismatch repair MutS family.</text>
</comment>
<protein>
    <recommendedName>
        <fullName evidence="1">DNA mismatch repair protein MutS</fullName>
    </recommendedName>
</protein>
<dbReference type="EMBL" id="CP001098">
    <property type="protein sequence ID" value="ACL69917.1"/>
    <property type="molecule type" value="Genomic_DNA"/>
</dbReference>
<dbReference type="RefSeq" id="WP_012636102.1">
    <property type="nucleotide sequence ID" value="NC_011899.1"/>
</dbReference>
<dbReference type="SMR" id="B8CX98"/>
<dbReference type="STRING" id="373903.Hore_11670"/>
<dbReference type="KEGG" id="hor:Hore_11670"/>
<dbReference type="eggNOG" id="COG0249">
    <property type="taxonomic scope" value="Bacteria"/>
</dbReference>
<dbReference type="HOGENOM" id="CLU_002472_4_0_9"/>
<dbReference type="OrthoDB" id="9802448at2"/>
<dbReference type="Proteomes" id="UP000000719">
    <property type="component" value="Chromosome"/>
</dbReference>
<dbReference type="GO" id="GO:0005829">
    <property type="term" value="C:cytosol"/>
    <property type="evidence" value="ECO:0007669"/>
    <property type="project" value="TreeGrafter"/>
</dbReference>
<dbReference type="GO" id="GO:0005524">
    <property type="term" value="F:ATP binding"/>
    <property type="evidence" value="ECO:0007669"/>
    <property type="project" value="UniProtKB-UniRule"/>
</dbReference>
<dbReference type="GO" id="GO:0140664">
    <property type="term" value="F:ATP-dependent DNA damage sensor activity"/>
    <property type="evidence" value="ECO:0007669"/>
    <property type="project" value="InterPro"/>
</dbReference>
<dbReference type="GO" id="GO:0003684">
    <property type="term" value="F:damaged DNA binding"/>
    <property type="evidence" value="ECO:0007669"/>
    <property type="project" value="UniProtKB-UniRule"/>
</dbReference>
<dbReference type="GO" id="GO:0030983">
    <property type="term" value="F:mismatched DNA binding"/>
    <property type="evidence" value="ECO:0007669"/>
    <property type="project" value="InterPro"/>
</dbReference>
<dbReference type="GO" id="GO:0006298">
    <property type="term" value="P:mismatch repair"/>
    <property type="evidence" value="ECO:0007669"/>
    <property type="project" value="UniProtKB-UniRule"/>
</dbReference>
<dbReference type="CDD" id="cd03284">
    <property type="entry name" value="ABC_MutS1"/>
    <property type="match status" value="1"/>
</dbReference>
<dbReference type="FunFam" id="1.10.1420.10:FF:000007">
    <property type="entry name" value="DNA mismatch repair protein MutS"/>
    <property type="match status" value="1"/>
</dbReference>
<dbReference type="FunFam" id="3.40.1170.10:FF:000001">
    <property type="entry name" value="DNA mismatch repair protein MutS"/>
    <property type="match status" value="1"/>
</dbReference>
<dbReference type="FunFam" id="3.40.50.300:FF:000870">
    <property type="entry name" value="MutS protein homolog 4"/>
    <property type="match status" value="1"/>
</dbReference>
<dbReference type="Gene3D" id="1.10.1420.10">
    <property type="match status" value="2"/>
</dbReference>
<dbReference type="Gene3D" id="3.40.1170.10">
    <property type="entry name" value="DNA repair protein MutS, domain I"/>
    <property type="match status" value="1"/>
</dbReference>
<dbReference type="Gene3D" id="3.30.420.110">
    <property type="entry name" value="MutS, connector domain"/>
    <property type="match status" value="1"/>
</dbReference>
<dbReference type="Gene3D" id="3.40.50.300">
    <property type="entry name" value="P-loop containing nucleotide triphosphate hydrolases"/>
    <property type="match status" value="1"/>
</dbReference>
<dbReference type="HAMAP" id="MF_00096">
    <property type="entry name" value="MutS"/>
    <property type="match status" value="1"/>
</dbReference>
<dbReference type="InterPro" id="IPR005748">
    <property type="entry name" value="DNA_mismatch_repair_MutS"/>
</dbReference>
<dbReference type="InterPro" id="IPR007695">
    <property type="entry name" value="DNA_mismatch_repair_MutS-lik_N"/>
</dbReference>
<dbReference type="InterPro" id="IPR017261">
    <property type="entry name" value="DNA_mismatch_repair_MutS/MSH"/>
</dbReference>
<dbReference type="InterPro" id="IPR000432">
    <property type="entry name" value="DNA_mismatch_repair_MutS_C"/>
</dbReference>
<dbReference type="InterPro" id="IPR007861">
    <property type="entry name" value="DNA_mismatch_repair_MutS_clamp"/>
</dbReference>
<dbReference type="InterPro" id="IPR007696">
    <property type="entry name" value="DNA_mismatch_repair_MutS_core"/>
</dbReference>
<dbReference type="InterPro" id="IPR016151">
    <property type="entry name" value="DNA_mismatch_repair_MutS_N"/>
</dbReference>
<dbReference type="InterPro" id="IPR036187">
    <property type="entry name" value="DNA_mismatch_repair_MutS_sf"/>
</dbReference>
<dbReference type="InterPro" id="IPR007860">
    <property type="entry name" value="DNA_mmatch_repair_MutS_con_dom"/>
</dbReference>
<dbReference type="InterPro" id="IPR045076">
    <property type="entry name" value="MutS"/>
</dbReference>
<dbReference type="InterPro" id="IPR036678">
    <property type="entry name" value="MutS_con_dom_sf"/>
</dbReference>
<dbReference type="InterPro" id="IPR027417">
    <property type="entry name" value="P-loop_NTPase"/>
</dbReference>
<dbReference type="NCBIfam" id="TIGR01070">
    <property type="entry name" value="mutS1"/>
    <property type="match status" value="1"/>
</dbReference>
<dbReference type="NCBIfam" id="NF003810">
    <property type="entry name" value="PRK05399.1"/>
    <property type="match status" value="1"/>
</dbReference>
<dbReference type="PANTHER" id="PTHR11361:SF34">
    <property type="entry name" value="DNA MISMATCH REPAIR PROTEIN MSH1, MITOCHONDRIAL"/>
    <property type="match status" value="1"/>
</dbReference>
<dbReference type="PANTHER" id="PTHR11361">
    <property type="entry name" value="DNA MISMATCH REPAIR PROTEIN MUTS FAMILY MEMBER"/>
    <property type="match status" value="1"/>
</dbReference>
<dbReference type="Pfam" id="PF01624">
    <property type="entry name" value="MutS_I"/>
    <property type="match status" value="1"/>
</dbReference>
<dbReference type="Pfam" id="PF05188">
    <property type="entry name" value="MutS_II"/>
    <property type="match status" value="1"/>
</dbReference>
<dbReference type="Pfam" id="PF05192">
    <property type="entry name" value="MutS_III"/>
    <property type="match status" value="1"/>
</dbReference>
<dbReference type="Pfam" id="PF05190">
    <property type="entry name" value="MutS_IV"/>
    <property type="match status" value="1"/>
</dbReference>
<dbReference type="Pfam" id="PF00488">
    <property type="entry name" value="MutS_V"/>
    <property type="match status" value="1"/>
</dbReference>
<dbReference type="PIRSF" id="PIRSF037677">
    <property type="entry name" value="DNA_mis_repair_Msh6"/>
    <property type="match status" value="1"/>
</dbReference>
<dbReference type="SMART" id="SM00534">
    <property type="entry name" value="MUTSac"/>
    <property type="match status" value="1"/>
</dbReference>
<dbReference type="SMART" id="SM00533">
    <property type="entry name" value="MUTSd"/>
    <property type="match status" value="1"/>
</dbReference>
<dbReference type="SUPFAM" id="SSF55271">
    <property type="entry name" value="DNA repair protein MutS, domain I"/>
    <property type="match status" value="1"/>
</dbReference>
<dbReference type="SUPFAM" id="SSF53150">
    <property type="entry name" value="DNA repair protein MutS, domain II"/>
    <property type="match status" value="1"/>
</dbReference>
<dbReference type="SUPFAM" id="SSF48334">
    <property type="entry name" value="DNA repair protein MutS, domain III"/>
    <property type="match status" value="1"/>
</dbReference>
<dbReference type="SUPFAM" id="SSF52540">
    <property type="entry name" value="P-loop containing nucleoside triphosphate hydrolases"/>
    <property type="match status" value="1"/>
</dbReference>
<dbReference type="PROSITE" id="PS00486">
    <property type="entry name" value="DNA_MISMATCH_REPAIR_2"/>
    <property type="match status" value="1"/>
</dbReference>
<feature type="chain" id="PRO_1000118685" description="DNA mismatch repair protein MutS">
    <location>
        <begin position="1"/>
        <end position="896"/>
    </location>
</feature>
<feature type="region of interest" description="Disordered" evidence="2">
    <location>
        <begin position="805"/>
        <end position="826"/>
    </location>
</feature>
<feature type="compositionally biased region" description="Basic and acidic residues" evidence="2">
    <location>
        <begin position="805"/>
        <end position="825"/>
    </location>
</feature>
<feature type="binding site" evidence="1">
    <location>
        <begin position="618"/>
        <end position="625"/>
    </location>
    <ligand>
        <name>ATP</name>
        <dbReference type="ChEBI" id="CHEBI:30616"/>
    </ligand>
</feature>